<evidence type="ECO:0000255" key="1"/>
<evidence type="ECO:0000256" key="2">
    <source>
        <dbReference type="SAM" id="MobiDB-lite"/>
    </source>
</evidence>
<evidence type="ECO:0000269" key="3">
    <source>
    </source>
</evidence>
<protein>
    <recommendedName>
        <fullName>Desiccation/radiation resistance protein DR_1769</fullName>
    </recommendedName>
</protein>
<gene>
    <name type="ordered locus">DR_1769</name>
</gene>
<comment type="function">
    <text evidence="3">Plays an important role in resistance to desiccation and radiation, maybe by protecting genome integrity under extreme conditions.</text>
</comment>
<comment type="domain">
    <text evidence="3">Contains an N-terminal PQQ binding domain and a C-terminal disorganized low-complexity (LC) hydrophilic region.</text>
</comment>
<comment type="disruption phenotype">
    <text evidence="3">Mutant is sensitive to gamma radiation and hypersensitive to desiccation. It shows delayed DNA double-strand break repair and delayed recovery of desiccated nucleoid.</text>
</comment>
<feature type="signal peptide" evidence="1">
    <location>
        <begin position="1"/>
        <end position="33"/>
    </location>
</feature>
<feature type="chain" id="PRO_0000429794" description="Desiccation/radiation resistance protein DR_1769">
    <location>
        <begin position="34"/>
        <end position="574"/>
    </location>
</feature>
<feature type="region of interest" description="Disordered" evidence="2">
    <location>
        <begin position="400"/>
        <end position="461"/>
    </location>
</feature>
<feature type="compositionally biased region" description="Low complexity" evidence="2">
    <location>
        <begin position="400"/>
        <end position="438"/>
    </location>
</feature>
<feature type="compositionally biased region" description="Pro residues" evidence="2">
    <location>
        <begin position="439"/>
        <end position="459"/>
    </location>
</feature>
<proteinExistence type="evidence at protein level"/>
<sequence>MPDPAARRFSLPPFPLAALALSVALLGAPASLAQTAAPAPAPAQTPAAASRAAAPRVSWTKPLKVSSPVSIGPRGELTYVGNDSRVHRTDASGKELWSFALGDIGRAQPVLTPDGGVITAAYDDTVYALSPAGQLTWKAKLDGDVFASPALRPDGSVVVATAGGTVYALSSSGQTLWSYKVGAPVFSSPAVAADGTIYFGAQNGRLHALSPEGRLTWTYAARSSVFSSPALDAEGNLYFGSGDRSIYSLSPAGTLRWVQPTGLFVNASPIVTRAGLVVVGSYDGQLYALNTNGQVAWTYAAGAAIAAPAAELSDGSVVVGDLNGTLHAVTPTGQALWTLPGGAKIDTGAAVSDQGTLYFAVDGGNLNAVENLRPLATGPWPTFRASPLGWGRSATAAELTAQTQARQAAAAASTSQQPRLPTLAQAPAPTPAPAQTTPRPQPTPAQPATPAAPVPPVASPAPATARLTPQVIGGVIYLPLSPIAAGLGYQVQAGSPTRALLVAGSQRLTVPVRAVGGQSLIALRFVTGLPGVSVERQAGTLTLRREGLSAALPLDLAQLLPWAPQPEFPGVVRR</sequence>
<dbReference type="EMBL" id="AE000513">
    <property type="protein sequence ID" value="AAF11323.1"/>
    <property type="molecule type" value="Genomic_DNA"/>
</dbReference>
<dbReference type="PIR" id="F75356">
    <property type="entry name" value="F75356"/>
</dbReference>
<dbReference type="RefSeq" id="NP_295492.1">
    <property type="nucleotide sequence ID" value="NC_001263.1"/>
</dbReference>
<dbReference type="RefSeq" id="WP_010888404.1">
    <property type="nucleotide sequence ID" value="NC_001263.1"/>
</dbReference>
<dbReference type="SMR" id="Q9RTJ3"/>
<dbReference type="STRING" id="243230.DR_1769"/>
<dbReference type="PaxDb" id="243230-DR_1769"/>
<dbReference type="EnsemblBacteria" id="AAF11323">
    <property type="protein sequence ID" value="AAF11323"/>
    <property type="gene ID" value="DR_1769"/>
</dbReference>
<dbReference type="GeneID" id="69518009"/>
<dbReference type="KEGG" id="dra:DR_1769"/>
<dbReference type="PATRIC" id="fig|243230.17.peg.1981"/>
<dbReference type="eggNOG" id="COG1520">
    <property type="taxonomic scope" value="Bacteria"/>
</dbReference>
<dbReference type="HOGENOM" id="CLU_473061_0_0_0"/>
<dbReference type="InParanoid" id="Q9RTJ3"/>
<dbReference type="OrthoDB" id="55730at2"/>
<dbReference type="Proteomes" id="UP000002524">
    <property type="component" value="Chromosome 1"/>
</dbReference>
<dbReference type="Gene3D" id="2.130.10.10">
    <property type="entry name" value="YVTN repeat-like/Quinoprotein amine dehydrogenase"/>
    <property type="match status" value="2"/>
</dbReference>
<dbReference type="InterPro" id="IPR052091">
    <property type="entry name" value="Beta-ala_Activ/Resist"/>
</dbReference>
<dbReference type="InterPro" id="IPR018391">
    <property type="entry name" value="PQQ_b-propeller_rpt"/>
</dbReference>
<dbReference type="InterPro" id="IPR002372">
    <property type="entry name" value="PQQ_rpt_dom"/>
</dbReference>
<dbReference type="InterPro" id="IPR011047">
    <property type="entry name" value="Quinoprotein_ADH-like_sf"/>
</dbReference>
<dbReference type="InterPro" id="IPR015943">
    <property type="entry name" value="WD40/YVTN_repeat-like_dom_sf"/>
</dbReference>
<dbReference type="PANTHER" id="PTHR44394">
    <property type="entry name" value="BETA-ALANINE-ACTIVATING ENZYME"/>
    <property type="match status" value="1"/>
</dbReference>
<dbReference type="PANTHER" id="PTHR44394:SF1">
    <property type="entry name" value="BETA-ALANINE-ACTIVATING ENZYME"/>
    <property type="match status" value="1"/>
</dbReference>
<dbReference type="Pfam" id="PF13360">
    <property type="entry name" value="PQQ_2"/>
    <property type="match status" value="2"/>
</dbReference>
<dbReference type="SMART" id="SM00564">
    <property type="entry name" value="PQQ"/>
    <property type="match status" value="7"/>
</dbReference>
<dbReference type="SUPFAM" id="SSF50998">
    <property type="entry name" value="Quinoprotein alcohol dehydrogenase-like"/>
    <property type="match status" value="1"/>
</dbReference>
<name>DRRP_DEIRA</name>
<organism>
    <name type="scientific">Deinococcus radiodurans (strain ATCC 13939 / DSM 20539 / JCM 16871 / CCUG 27074 / LMG 4051 / NBRC 15346 / NCIMB 9279 / VKM B-1422 / R1)</name>
    <dbReference type="NCBI Taxonomy" id="243230"/>
    <lineage>
        <taxon>Bacteria</taxon>
        <taxon>Thermotogati</taxon>
        <taxon>Deinococcota</taxon>
        <taxon>Deinococci</taxon>
        <taxon>Deinococcales</taxon>
        <taxon>Deinococcaceae</taxon>
        <taxon>Deinococcus</taxon>
    </lineage>
</organism>
<reference key="1">
    <citation type="journal article" date="1999" name="Science">
        <title>Genome sequence of the radioresistant bacterium Deinococcus radiodurans R1.</title>
        <authorList>
            <person name="White O."/>
            <person name="Eisen J.A."/>
            <person name="Heidelberg J.F."/>
            <person name="Hickey E.K."/>
            <person name="Peterson J.D."/>
            <person name="Dodson R.J."/>
            <person name="Haft D.H."/>
            <person name="Gwinn M.L."/>
            <person name="Nelson W.C."/>
            <person name="Richardson D.L."/>
            <person name="Moffat K.S."/>
            <person name="Qin H."/>
            <person name="Jiang L."/>
            <person name="Pamphile W."/>
            <person name="Crosby M."/>
            <person name="Shen M."/>
            <person name="Vamathevan J.J."/>
            <person name="Lam P."/>
            <person name="McDonald L.A."/>
            <person name="Utterback T.R."/>
            <person name="Zalewski C."/>
            <person name="Makarova K.S."/>
            <person name="Aravind L."/>
            <person name="Daly M.J."/>
            <person name="Minton K.W."/>
            <person name="Fleischmann R.D."/>
            <person name="Ketchum K.A."/>
            <person name="Nelson K.E."/>
            <person name="Salzberg S.L."/>
            <person name="Smith H.O."/>
            <person name="Venter J.C."/>
            <person name="Fraser C.M."/>
        </authorList>
    </citation>
    <scope>NUCLEOTIDE SEQUENCE [LARGE SCALE GENOMIC DNA]</scope>
    <source>
        <strain>ATCC 13939 / DSM 20539 / JCM 16871 / CCUG 27074 / LMG 4051 / NBRC 15346 / NCIMB 9279 / VKM B-1422 / R1</strain>
    </source>
</reference>
<reference key="2">
    <citation type="journal article" date="2013" name="J. Bacteriol.">
        <title>DR1769, a protein with N-terminal beta propeller repeats and a low-complexity hydrophilic tail, plays a role in desiccation tolerance of Deinococcus radiodurans.</title>
        <authorList>
            <person name="Rajpurohit Y.S."/>
            <person name="Misra H.S."/>
        </authorList>
    </citation>
    <scope>FUNCTION IN RESISTANCE</scope>
    <scope>DOMAIN</scope>
    <scope>DISRUPTION PHENOTYPE</scope>
    <source>
        <strain>ATCC 13939 / DSM 20539 / JCM 16871 / CCUG 27074 / LMG 4051 / NBRC 15346 / NCIMB 9279 / VKM B-1422 / R1</strain>
    </source>
</reference>
<keyword id="KW-1185">Reference proteome</keyword>
<keyword id="KW-0732">Signal</keyword>
<accession>Q9RTJ3</accession>